<comment type="function">
    <text evidence="1 11 12 13 14">In embryonic stem (ES) cells, plays a crucial role in the differentiation potential, particularly along the neural lineage, regulating gene induction and H3 'Lys-4' methylation at key developmental loci, including that mediated by retinoic acid (By similarity). Does not affect ES cell self-renewal (By similarity). Component or associated component of some histone methyltransferase complexes which regulates transcription through recruitment of those complexes to gene promoters (PubMed:19131338). As part of the MLL1/MLL complex, involved in mono-, di- and trimethylation at 'Lys-4' of histone H3 (PubMed:19556245). Histone H3 'Lys-4' methylation represents a specific tag for epigenetic transcriptional activation (PubMed:19556245). In association with ASH2L and WDR5, stimulates the histone methyltransferase activities of KMT2A, KMT2B, KMT2C, KMT2D, SETD1A and SETD1B (PubMed:21220120, PubMed:22266653).</text>
</comment>
<comment type="subunit">
    <text evidence="1 3 4 5 6 7 8 9 10 11 12 13 15">Component of the SET1 complex, at least composed of the catalytic subunit (SETD1A or SETD1B), WDR5, WDR82, RBBP5, ASH2L/ASH2, CXXC1/CFP1, HCFC1 and DPY30 (PubMed:16253997, PubMed:17355966, PubMed:17998332, PubMed:18838538). Core component of several methyltransferase-containing complexes including MLL1/MLL, MLL2/3 (also named ASCOM complex) and MLL4/WBP7 (PubMed:15199122, PubMed:15960975, PubMed:17500065). Each complex is at least composed of ASH2L, RBBP5, WDR5, DPY30, one or more specific histone methyltransferases (KMT2A/MLL1, KMT2D/MLL2, KMT2C/MLL3 and KMT2B/MLL4), and the facultative components PAGR1, BACC1, CHD8, E2F6, HCFC1, HCFC2, HSP70, INO80C, KDM6A, KANSL1, LAS1L, MAX, MCRS1, MEN1, MGA, MYST1/MOF, NCOA6, PAXIP1/PTIP, PELP1, PHF20, PRP31, RING2, RUVB1/TIP49A, RUVB2/TIP49B, SENP3, TAF1, TAF4, TAF6, TAF7, TAF9, TEX10 and alpha- and beta-tubulin (PubMed:14992727, PubMed:15199122, PubMed:15960975, PubMed:17500065). Component of a histone methylation complex composed of at least ZNF335, RBBP5, ASH2L and WDR5; the complex may have histone H3-specific methyltransferase activity, however does not have specificity for 'Lys-4' of histone H3 (PubMed:19131338). Interacts with ZNF335 (PubMed:19131338, PubMed:23178126). Interacts with ASH2L; the interaction is direct (PubMed:19131338, PubMed:19556245, PubMed:21220120). Interacts with WDR5; the interaction is direct (PubMed:19556245, PubMed:21220120). Components of the ZNF335-RBBP5-ASH2L-WDR5 histone methylation complex may associate with components of a nuclear receptor-mediated transcription complex to form a complex at least composed of ZNF335, HCFC1, CCAR2, EMSY, MKI67, RBBP5, ASH2L and WDR5 (PubMed:19131338). Within this complex interacts with EMSY (PubMed:19131338). Found in a complex with RBBP5, ASH2L, DPY30, KMT2A, KMT2D and WDR5 (By similarity). Interacts with SETD1A (PubMed:17998332). Interacts with WDR82 (PubMed:18838538).</text>
</comment>
<comment type="interaction">
    <interactant intactId="EBI-592823">
        <id>Q15291</id>
    </interactant>
    <interactant intactId="EBI-540797">
        <id>Q9UBL3</id>
        <label>ASH2L</label>
    </interactant>
    <organismsDiffer>false</organismsDiffer>
    <experiments>39</experiments>
</comment>
<comment type="interaction">
    <interactant intactId="EBI-592823">
        <id>Q15291</id>
    </interactant>
    <interactant intactId="EBI-16130425">
        <id>Q9UBL3-3</id>
        <label>ASH2L</label>
    </interactant>
    <organismsDiffer>false</organismsDiffer>
    <experiments>9</experiments>
</comment>
<comment type="interaction">
    <interactant intactId="EBI-592823">
        <id>Q15291</id>
    </interactant>
    <interactant intactId="EBI-1169146">
        <id>Q9HCK8</id>
        <label>CHD8</label>
    </interactant>
    <organismsDiffer>false</organismsDiffer>
    <experiments>2</experiments>
</comment>
<comment type="interaction">
    <interactant intactId="EBI-592823">
        <id>Q15291</id>
    </interactant>
    <interactant intactId="EBI-949911">
        <id>Q9P0U4</id>
        <label>CXXC1</label>
    </interactant>
    <organismsDiffer>false</organismsDiffer>
    <experiments>8</experiments>
</comment>
<comment type="interaction">
    <interactant intactId="EBI-592823">
        <id>Q15291</id>
    </interactant>
    <interactant intactId="EBI-591370">
        <id>Q03164</id>
        <label>KMT2A</label>
    </interactant>
    <organismsDiffer>false</organismsDiffer>
    <experiments>11</experiments>
</comment>
<comment type="interaction">
    <interactant intactId="EBI-592823">
        <id>Q15291</id>
    </interactant>
    <interactant intactId="EBI-743225">
        <id>Q6ZW49</id>
        <label>PAXIP1</label>
    </interactant>
    <organismsDiffer>false</organismsDiffer>
    <experiments>13</experiments>
</comment>
<comment type="interaction">
    <interactant intactId="EBI-592823">
        <id>Q15291</id>
    </interactant>
    <interactant intactId="EBI-540779">
        <id>O15047</id>
        <label>SETD1A</label>
    </interactant>
    <organismsDiffer>false</organismsDiffer>
    <experiments>5</experiments>
</comment>
<comment type="interaction">
    <interactant intactId="EBI-592823">
        <id>Q15291</id>
    </interactant>
    <interactant intactId="EBI-540834">
        <id>P61964</id>
        <label>WDR5</label>
    </interactant>
    <organismsDiffer>false</organismsDiffer>
    <experiments>17</experiments>
</comment>
<comment type="subcellular location">
    <subcellularLocation>
        <location evidence="7">Nucleus</location>
    </subcellularLocation>
</comment>
<comment type="alternative products">
    <event type="alternative splicing"/>
    <isoform>
        <id>Q15291-1</id>
        <name>1</name>
        <sequence type="displayed"/>
    </isoform>
    <isoform>
        <id>Q15291-2</id>
        <name>2</name>
        <sequence type="described" ref="VSP_035583"/>
    </isoform>
</comment>
<comment type="tissue specificity">
    <text>Ubiquitously expressed.</text>
</comment>
<keyword id="KW-0002">3D-structure</keyword>
<keyword id="KW-0025">Alternative splicing</keyword>
<keyword id="KW-0156">Chromatin regulator</keyword>
<keyword id="KW-1017">Isopeptide bond</keyword>
<keyword id="KW-0539">Nucleus</keyword>
<keyword id="KW-0597">Phosphoprotein</keyword>
<keyword id="KW-1267">Proteomics identification</keyword>
<keyword id="KW-1185">Reference proteome</keyword>
<keyword id="KW-0677">Repeat</keyword>
<keyword id="KW-0804">Transcription</keyword>
<keyword id="KW-0805">Transcription regulation</keyword>
<keyword id="KW-0832">Ubl conjugation</keyword>
<keyword id="KW-0853">WD repeat</keyword>
<protein>
    <recommendedName>
        <fullName>Retinoblastoma-binding protein 5</fullName>
        <shortName>RBBP-5</shortName>
    </recommendedName>
    <alternativeName>
        <fullName>Retinoblastoma-binding protein RBQ-3</fullName>
    </alternativeName>
</protein>
<evidence type="ECO:0000250" key="1">
    <source>
        <dbReference type="UniProtKB" id="Q8BX09"/>
    </source>
</evidence>
<evidence type="ECO:0000256" key="2">
    <source>
        <dbReference type="SAM" id="MobiDB-lite"/>
    </source>
</evidence>
<evidence type="ECO:0000269" key="3">
    <source>
    </source>
</evidence>
<evidence type="ECO:0000269" key="4">
    <source>
    </source>
</evidence>
<evidence type="ECO:0000269" key="5">
    <source>
    </source>
</evidence>
<evidence type="ECO:0000269" key="6">
    <source>
    </source>
</evidence>
<evidence type="ECO:0000269" key="7">
    <source>
    </source>
</evidence>
<evidence type="ECO:0000269" key="8">
    <source>
    </source>
</evidence>
<evidence type="ECO:0000269" key="9">
    <source>
    </source>
</evidence>
<evidence type="ECO:0000269" key="10">
    <source>
    </source>
</evidence>
<evidence type="ECO:0000269" key="11">
    <source>
    </source>
</evidence>
<evidence type="ECO:0000269" key="12">
    <source>
    </source>
</evidence>
<evidence type="ECO:0000269" key="13">
    <source>
    </source>
</evidence>
<evidence type="ECO:0000269" key="14">
    <source>
    </source>
</evidence>
<evidence type="ECO:0000269" key="15">
    <source>
    </source>
</evidence>
<evidence type="ECO:0000269" key="16">
    <source>
    </source>
</evidence>
<evidence type="ECO:0000303" key="17">
    <source>
    </source>
</evidence>
<evidence type="ECO:0000303" key="18">
    <source>
    </source>
</evidence>
<evidence type="ECO:0000305" key="19"/>
<evidence type="ECO:0007744" key="20">
    <source>
        <dbReference type="PDB" id="3P4F"/>
    </source>
</evidence>
<evidence type="ECO:0007744" key="21">
    <source>
    </source>
</evidence>
<evidence type="ECO:0007744" key="22">
    <source>
    </source>
</evidence>
<evidence type="ECO:0007744" key="23">
    <source>
    </source>
</evidence>
<evidence type="ECO:0007744" key="24">
    <source>
    </source>
</evidence>
<evidence type="ECO:0007829" key="25">
    <source>
        <dbReference type="PDB" id="5F6L"/>
    </source>
</evidence>
<evidence type="ECO:0007829" key="26">
    <source>
        <dbReference type="PDB" id="6KIU"/>
    </source>
</evidence>
<evidence type="ECO:0007829" key="27">
    <source>
        <dbReference type="PDB" id="6KM7"/>
    </source>
</evidence>
<feature type="chain" id="PRO_0000051194" description="Retinoblastoma-binding protein 5">
    <location>
        <begin position="1"/>
        <end position="538"/>
    </location>
</feature>
<feature type="repeat" description="WD 1">
    <location>
        <begin position="22"/>
        <end position="63"/>
    </location>
</feature>
<feature type="repeat" description="WD 2">
    <location>
        <begin position="64"/>
        <end position="103"/>
    </location>
</feature>
<feature type="repeat" description="WD 3">
    <location>
        <begin position="148"/>
        <end position="188"/>
    </location>
</feature>
<feature type="repeat" description="WD 4">
    <location>
        <begin position="196"/>
        <end position="235"/>
    </location>
</feature>
<feature type="repeat" description="WD 5">
    <location>
        <begin position="249"/>
        <end position="291"/>
    </location>
</feature>
<feature type="repeat" description="WD 6">
    <location>
        <begin position="293"/>
        <end position="331"/>
    </location>
</feature>
<feature type="region of interest" description="Interaction with ASH2L" evidence="13">
    <location>
        <begin position="330"/>
        <end position="366"/>
    </location>
</feature>
<feature type="region of interest" description="Disordered" evidence="2">
    <location>
        <begin position="344"/>
        <end position="377"/>
    </location>
</feature>
<feature type="region of interest" description="Interaction with WDR5" evidence="13">
    <location>
        <begin position="371"/>
        <end position="380"/>
    </location>
</feature>
<feature type="region of interest" description="Disordered" evidence="2">
    <location>
        <begin position="408"/>
        <end position="538"/>
    </location>
</feature>
<feature type="compositionally biased region" description="Acidic residues" evidence="2">
    <location>
        <begin position="344"/>
        <end position="360"/>
    </location>
</feature>
<feature type="compositionally biased region" description="Basic residues" evidence="2">
    <location>
        <begin position="479"/>
        <end position="490"/>
    </location>
</feature>
<feature type="compositionally biased region" description="Basic and acidic residues" evidence="2">
    <location>
        <begin position="491"/>
        <end position="510"/>
    </location>
</feature>
<feature type="modified residue" description="Phosphothreonine; by CDK1" evidence="16">
    <location>
        <position position="252"/>
    </location>
</feature>
<feature type="modified residue" description="Phosphoserine" evidence="21">
    <location>
        <position position="350"/>
    </location>
</feature>
<feature type="modified residue" description="Phosphoserine" evidence="22">
    <location>
        <position position="388"/>
    </location>
</feature>
<feature type="modified residue" description="Phosphoserine" evidence="22">
    <location>
        <position position="389"/>
    </location>
</feature>
<feature type="modified residue" description="Phosphoserine; by CDK1" evidence="16">
    <location>
        <position position="497"/>
    </location>
</feature>
<feature type="modified residue" description="Phosphoserine" evidence="23">
    <location>
        <position position="525"/>
    </location>
</feature>
<feature type="cross-link" description="Glycyl lysine isopeptide (Lys-Gly) (interchain with G-Cter in SUMO2)" evidence="24">
    <location>
        <position position="129"/>
    </location>
</feature>
<feature type="splice variant" id="VSP_035583" description="In isoform 2." evidence="17 18">
    <location>
        <begin position="492"/>
        <end position="529"/>
    </location>
</feature>
<feature type="mutagenesis site" description="Significant reduction in its ability to stimulate KMT2A methyltransferase activity in association with WDR5 and ASH2L." evidence="13">
    <original>E</original>
    <variation>A</variation>
    <location>
        <position position="374"/>
    </location>
</feature>
<feature type="mutagenesis site" description="Significant reduction in its ability to stimulate KMT2A methyltransferase activity in association with WDR5 and ASH2L." evidence="13">
    <original>V</original>
    <variation>E</variation>
    <location>
        <position position="375"/>
    </location>
</feature>
<feature type="mutagenesis site" description="Reduced ability to stimulate KMT2A methyltransferase activity in association with WDR5 and ASH2L." evidence="13">
    <original>D</original>
    <variation>A</variation>
    <location>
        <position position="376"/>
    </location>
</feature>
<feature type="mutagenesis site" description="Reduced ability to stimulate KMT2A methyltransferase activity in association with WDR5 and ASH2L." evidence="13">
    <original>V</original>
    <variation>E</variation>
    <location>
        <position position="377"/>
    </location>
</feature>
<feature type="sequence conflict" description="In Ref. 2; BAF82826." evidence="19" ref="2">
    <original>F</original>
    <variation>Y</variation>
    <location>
        <position position="206"/>
    </location>
</feature>
<feature type="sequence conflict" description="In Ref. 1; CAA59446." evidence="19" ref="1">
    <original>K</original>
    <variation>E</variation>
    <location>
        <position position="244"/>
    </location>
</feature>
<feature type="sequence conflict" description="In Ref. 1; CAA59446." evidence="19" ref="1">
    <original>E</original>
    <variation>G</variation>
    <location>
        <position position="351"/>
    </location>
</feature>
<feature type="strand" evidence="27">
    <location>
        <begin position="16"/>
        <end position="21"/>
    </location>
</feature>
<feature type="strand" evidence="26">
    <location>
        <begin position="23"/>
        <end position="25"/>
    </location>
</feature>
<feature type="strand" evidence="27">
    <location>
        <begin position="27"/>
        <end position="32"/>
    </location>
</feature>
<feature type="strand" evidence="27">
    <location>
        <begin position="36"/>
        <end position="43"/>
    </location>
</feature>
<feature type="strand" evidence="27">
    <location>
        <begin position="46"/>
        <end position="52"/>
    </location>
</feature>
<feature type="turn" evidence="27">
    <location>
        <begin position="53"/>
        <end position="56"/>
    </location>
</feature>
<feature type="strand" evidence="27">
    <location>
        <begin position="57"/>
        <end position="63"/>
    </location>
</feature>
<feature type="strand" evidence="27">
    <location>
        <begin position="69"/>
        <end position="74"/>
    </location>
</feature>
<feature type="strand" evidence="27">
    <location>
        <begin position="78"/>
        <end position="85"/>
    </location>
</feature>
<feature type="strand" evidence="27">
    <location>
        <begin position="88"/>
        <end position="94"/>
    </location>
</feature>
<feature type="turn" evidence="27">
    <location>
        <begin position="95"/>
        <end position="97"/>
    </location>
</feature>
<feature type="strand" evidence="27">
    <location>
        <begin position="100"/>
        <end position="105"/>
    </location>
</feature>
<feature type="strand" evidence="27">
    <location>
        <begin position="110"/>
        <end position="116"/>
    </location>
</feature>
<feature type="strand" evidence="27">
    <location>
        <begin position="119"/>
        <end position="127"/>
    </location>
</feature>
<feature type="strand" evidence="27">
    <location>
        <begin position="133"/>
        <end position="136"/>
    </location>
</feature>
<feature type="turn" evidence="27">
    <location>
        <begin position="137"/>
        <end position="140"/>
    </location>
</feature>
<feature type="strand" evidence="27">
    <location>
        <begin position="141"/>
        <end position="144"/>
    </location>
</feature>
<feature type="strand" evidence="27">
    <location>
        <begin position="155"/>
        <end position="159"/>
    </location>
</feature>
<feature type="strand" evidence="27">
    <location>
        <begin position="163"/>
        <end position="170"/>
    </location>
</feature>
<feature type="strand" evidence="27">
    <location>
        <begin position="174"/>
        <end position="179"/>
    </location>
</feature>
<feature type="turn" evidence="27">
    <location>
        <begin position="180"/>
        <end position="182"/>
    </location>
</feature>
<feature type="strand" evidence="27">
    <location>
        <begin position="185"/>
        <end position="190"/>
    </location>
</feature>
<feature type="strand" evidence="26">
    <location>
        <begin position="194"/>
        <end position="196"/>
    </location>
</feature>
<feature type="strand" evidence="27">
    <location>
        <begin position="201"/>
        <end position="206"/>
    </location>
</feature>
<feature type="strand" evidence="27">
    <location>
        <begin position="208"/>
        <end position="217"/>
    </location>
</feature>
<feature type="strand" evidence="27">
    <location>
        <begin position="222"/>
        <end position="226"/>
    </location>
</feature>
<feature type="helix" evidence="27">
    <location>
        <begin position="227"/>
        <end position="233"/>
    </location>
</feature>
<feature type="strand" evidence="27">
    <location>
        <begin position="242"/>
        <end position="245"/>
    </location>
</feature>
<feature type="turn" evidence="27">
    <location>
        <begin position="248"/>
        <end position="250"/>
    </location>
</feature>
<feature type="strand" evidence="27">
    <location>
        <begin position="254"/>
        <end position="259"/>
    </location>
</feature>
<feature type="strand" evidence="27">
    <location>
        <begin position="263"/>
        <end position="280"/>
    </location>
</feature>
<feature type="turn" evidence="27">
    <location>
        <begin position="281"/>
        <end position="283"/>
    </location>
</feature>
<feature type="strand" evidence="27">
    <location>
        <begin position="286"/>
        <end position="291"/>
    </location>
</feature>
<feature type="strand" evidence="27">
    <location>
        <begin position="298"/>
        <end position="303"/>
    </location>
</feature>
<feature type="strand" evidence="27">
    <location>
        <begin position="305"/>
        <end position="308"/>
    </location>
</feature>
<feature type="strand" evidence="27">
    <location>
        <begin position="310"/>
        <end position="314"/>
    </location>
</feature>
<feature type="strand" evidence="27">
    <location>
        <begin position="317"/>
        <end position="322"/>
    </location>
</feature>
<feature type="strand" evidence="26">
    <location>
        <begin position="329"/>
        <end position="332"/>
    </location>
</feature>
<feature type="turn" evidence="25">
    <location>
        <begin position="349"/>
        <end position="352"/>
    </location>
</feature>
<feature type="strand" evidence="27">
    <location>
        <begin position="453"/>
        <end position="456"/>
    </location>
</feature>
<feature type="turn" evidence="27">
    <location>
        <begin position="469"/>
        <end position="471"/>
    </location>
</feature>
<reference key="1">
    <citation type="journal article" date="1995" name="Genomics">
        <title>Molecular cloning of a human protein that binds to the retinoblastoma protein and chromosomal mapping.</title>
        <authorList>
            <person name="Saijo M."/>
            <person name="Sakai Y."/>
            <person name="Kishino T."/>
            <person name="Niikawa N."/>
            <person name="Matsuura Y."/>
            <person name="Morino K."/>
            <person name="Tamai K."/>
            <person name="Taya Y."/>
        </authorList>
    </citation>
    <scope>NUCLEOTIDE SEQUENCE [MRNA] (ISOFORM 1)</scope>
    <scope>PHOSPHORYLATION AT THR-252 AND SER-497</scope>
    <scope>CHARACTERIZATION</scope>
    <source>
        <tissue>Lung carcinoma</tissue>
        <tissue>Testis</tissue>
    </source>
</reference>
<reference key="2">
    <citation type="journal article" date="2004" name="Nat. Genet.">
        <title>Complete sequencing and characterization of 21,243 full-length human cDNAs.</title>
        <authorList>
            <person name="Ota T."/>
            <person name="Suzuki Y."/>
            <person name="Nishikawa T."/>
            <person name="Otsuki T."/>
            <person name="Sugiyama T."/>
            <person name="Irie R."/>
            <person name="Wakamatsu A."/>
            <person name="Hayashi K."/>
            <person name="Sato H."/>
            <person name="Nagai K."/>
            <person name="Kimura K."/>
            <person name="Makita H."/>
            <person name="Sekine M."/>
            <person name="Obayashi M."/>
            <person name="Nishi T."/>
            <person name="Shibahara T."/>
            <person name="Tanaka T."/>
            <person name="Ishii S."/>
            <person name="Yamamoto J."/>
            <person name="Saito K."/>
            <person name="Kawai Y."/>
            <person name="Isono Y."/>
            <person name="Nakamura Y."/>
            <person name="Nagahari K."/>
            <person name="Murakami K."/>
            <person name="Yasuda T."/>
            <person name="Iwayanagi T."/>
            <person name="Wagatsuma M."/>
            <person name="Shiratori A."/>
            <person name="Sudo H."/>
            <person name="Hosoiri T."/>
            <person name="Kaku Y."/>
            <person name="Kodaira H."/>
            <person name="Kondo H."/>
            <person name="Sugawara M."/>
            <person name="Takahashi M."/>
            <person name="Kanda K."/>
            <person name="Yokoi T."/>
            <person name="Furuya T."/>
            <person name="Kikkawa E."/>
            <person name="Omura Y."/>
            <person name="Abe K."/>
            <person name="Kamihara K."/>
            <person name="Katsuta N."/>
            <person name="Sato K."/>
            <person name="Tanikawa M."/>
            <person name="Yamazaki M."/>
            <person name="Ninomiya K."/>
            <person name="Ishibashi T."/>
            <person name="Yamashita H."/>
            <person name="Murakawa K."/>
            <person name="Fujimori K."/>
            <person name="Tanai H."/>
            <person name="Kimata M."/>
            <person name="Watanabe M."/>
            <person name="Hiraoka S."/>
            <person name="Chiba Y."/>
            <person name="Ishida S."/>
            <person name="Ono Y."/>
            <person name="Takiguchi S."/>
            <person name="Watanabe S."/>
            <person name="Yosida M."/>
            <person name="Hotuta T."/>
            <person name="Kusano J."/>
            <person name="Kanehori K."/>
            <person name="Takahashi-Fujii A."/>
            <person name="Hara H."/>
            <person name="Tanase T.-O."/>
            <person name="Nomura Y."/>
            <person name="Togiya S."/>
            <person name="Komai F."/>
            <person name="Hara R."/>
            <person name="Takeuchi K."/>
            <person name="Arita M."/>
            <person name="Imose N."/>
            <person name="Musashino K."/>
            <person name="Yuuki H."/>
            <person name="Oshima A."/>
            <person name="Sasaki N."/>
            <person name="Aotsuka S."/>
            <person name="Yoshikawa Y."/>
            <person name="Matsunawa H."/>
            <person name="Ichihara T."/>
            <person name="Shiohata N."/>
            <person name="Sano S."/>
            <person name="Moriya S."/>
            <person name="Momiyama H."/>
            <person name="Satoh N."/>
            <person name="Takami S."/>
            <person name="Terashima Y."/>
            <person name="Suzuki O."/>
            <person name="Nakagawa S."/>
            <person name="Senoh A."/>
            <person name="Mizoguchi H."/>
            <person name="Goto Y."/>
            <person name="Shimizu F."/>
            <person name="Wakebe H."/>
            <person name="Hishigaki H."/>
            <person name="Watanabe T."/>
            <person name="Sugiyama A."/>
            <person name="Takemoto M."/>
            <person name="Kawakami B."/>
            <person name="Yamazaki M."/>
            <person name="Watanabe K."/>
            <person name="Kumagai A."/>
            <person name="Itakura S."/>
            <person name="Fukuzumi Y."/>
            <person name="Fujimori Y."/>
            <person name="Komiyama M."/>
            <person name="Tashiro H."/>
            <person name="Tanigami A."/>
            <person name="Fujiwara T."/>
            <person name="Ono T."/>
            <person name="Yamada K."/>
            <person name="Fujii Y."/>
            <person name="Ozaki K."/>
            <person name="Hirao M."/>
            <person name="Ohmori Y."/>
            <person name="Kawabata A."/>
            <person name="Hikiji T."/>
            <person name="Kobatake N."/>
            <person name="Inagaki H."/>
            <person name="Ikema Y."/>
            <person name="Okamoto S."/>
            <person name="Okitani R."/>
            <person name="Kawakami T."/>
            <person name="Noguchi S."/>
            <person name="Itoh T."/>
            <person name="Shigeta K."/>
            <person name="Senba T."/>
            <person name="Matsumura K."/>
            <person name="Nakajima Y."/>
            <person name="Mizuno T."/>
            <person name="Morinaga M."/>
            <person name="Sasaki M."/>
            <person name="Togashi T."/>
            <person name="Oyama M."/>
            <person name="Hata H."/>
            <person name="Watanabe M."/>
            <person name="Komatsu T."/>
            <person name="Mizushima-Sugano J."/>
            <person name="Satoh T."/>
            <person name="Shirai Y."/>
            <person name="Takahashi Y."/>
            <person name="Nakagawa K."/>
            <person name="Okumura K."/>
            <person name="Nagase T."/>
            <person name="Nomura N."/>
            <person name="Kikuchi H."/>
            <person name="Masuho Y."/>
            <person name="Yamashita R."/>
            <person name="Nakai K."/>
            <person name="Yada T."/>
            <person name="Nakamura Y."/>
            <person name="Ohara O."/>
            <person name="Isogai T."/>
            <person name="Sugano S."/>
        </authorList>
    </citation>
    <scope>NUCLEOTIDE SEQUENCE [LARGE SCALE MRNA] (ISOFORM 2)</scope>
    <source>
        <tissue>Thalamus</tissue>
    </source>
</reference>
<reference key="3">
    <citation type="journal article" date="2006" name="Nature">
        <title>The DNA sequence and biological annotation of human chromosome 1.</title>
        <authorList>
            <person name="Gregory S.G."/>
            <person name="Barlow K.F."/>
            <person name="McLay K.E."/>
            <person name="Kaul R."/>
            <person name="Swarbreck D."/>
            <person name="Dunham A."/>
            <person name="Scott C.E."/>
            <person name="Howe K.L."/>
            <person name="Woodfine K."/>
            <person name="Spencer C.C.A."/>
            <person name="Jones M.C."/>
            <person name="Gillson C."/>
            <person name="Searle S."/>
            <person name="Zhou Y."/>
            <person name="Kokocinski F."/>
            <person name="McDonald L."/>
            <person name="Evans R."/>
            <person name="Phillips K."/>
            <person name="Atkinson A."/>
            <person name="Cooper R."/>
            <person name="Jones C."/>
            <person name="Hall R.E."/>
            <person name="Andrews T.D."/>
            <person name="Lloyd C."/>
            <person name="Ainscough R."/>
            <person name="Almeida J.P."/>
            <person name="Ambrose K.D."/>
            <person name="Anderson F."/>
            <person name="Andrew R.W."/>
            <person name="Ashwell R.I.S."/>
            <person name="Aubin K."/>
            <person name="Babbage A.K."/>
            <person name="Bagguley C.L."/>
            <person name="Bailey J."/>
            <person name="Beasley H."/>
            <person name="Bethel G."/>
            <person name="Bird C.P."/>
            <person name="Bray-Allen S."/>
            <person name="Brown J.Y."/>
            <person name="Brown A.J."/>
            <person name="Buckley D."/>
            <person name="Burton J."/>
            <person name="Bye J."/>
            <person name="Carder C."/>
            <person name="Chapman J.C."/>
            <person name="Clark S.Y."/>
            <person name="Clarke G."/>
            <person name="Clee C."/>
            <person name="Cobley V."/>
            <person name="Collier R.E."/>
            <person name="Corby N."/>
            <person name="Coville G.J."/>
            <person name="Davies J."/>
            <person name="Deadman R."/>
            <person name="Dunn M."/>
            <person name="Earthrowl M."/>
            <person name="Ellington A.G."/>
            <person name="Errington H."/>
            <person name="Frankish A."/>
            <person name="Frankland J."/>
            <person name="French L."/>
            <person name="Garner P."/>
            <person name="Garnett J."/>
            <person name="Gay L."/>
            <person name="Ghori M.R.J."/>
            <person name="Gibson R."/>
            <person name="Gilby L.M."/>
            <person name="Gillett W."/>
            <person name="Glithero R.J."/>
            <person name="Grafham D.V."/>
            <person name="Griffiths C."/>
            <person name="Griffiths-Jones S."/>
            <person name="Grocock R."/>
            <person name="Hammond S."/>
            <person name="Harrison E.S.I."/>
            <person name="Hart E."/>
            <person name="Haugen E."/>
            <person name="Heath P.D."/>
            <person name="Holmes S."/>
            <person name="Holt K."/>
            <person name="Howden P.J."/>
            <person name="Hunt A.R."/>
            <person name="Hunt S.E."/>
            <person name="Hunter G."/>
            <person name="Isherwood J."/>
            <person name="James R."/>
            <person name="Johnson C."/>
            <person name="Johnson D."/>
            <person name="Joy A."/>
            <person name="Kay M."/>
            <person name="Kershaw J.K."/>
            <person name="Kibukawa M."/>
            <person name="Kimberley A.M."/>
            <person name="King A."/>
            <person name="Knights A.J."/>
            <person name="Lad H."/>
            <person name="Laird G."/>
            <person name="Lawlor S."/>
            <person name="Leongamornlert D.A."/>
            <person name="Lloyd D.M."/>
            <person name="Loveland J."/>
            <person name="Lovell J."/>
            <person name="Lush M.J."/>
            <person name="Lyne R."/>
            <person name="Martin S."/>
            <person name="Mashreghi-Mohammadi M."/>
            <person name="Matthews L."/>
            <person name="Matthews N.S.W."/>
            <person name="McLaren S."/>
            <person name="Milne S."/>
            <person name="Mistry S."/>
            <person name="Moore M.J.F."/>
            <person name="Nickerson T."/>
            <person name="O'Dell C.N."/>
            <person name="Oliver K."/>
            <person name="Palmeiri A."/>
            <person name="Palmer S.A."/>
            <person name="Parker A."/>
            <person name="Patel D."/>
            <person name="Pearce A.V."/>
            <person name="Peck A.I."/>
            <person name="Pelan S."/>
            <person name="Phelps K."/>
            <person name="Phillimore B.J."/>
            <person name="Plumb R."/>
            <person name="Rajan J."/>
            <person name="Raymond C."/>
            <person name="Rouse G."/>
            <person name="Saenphimmachak C."/>
            <person name="Sehra H.K."/>
            <person name="Sheridan E."/>
            <person name="Shownkeen R."/>
            <person name="Sims S."/>
            <person name="Skuce C.D."/>
            <person name="Smith M."/>
            <person name="Steward C."/>
            <person name="Subramanian S."/>
            <person name="Sycamore N."/>
            <person name="Tracey A."/>
            <person name="Tromans A."/>
            <person name="Van Helmond Z."/>
            <person name="Wall M."/>
            <person name="Wallis J.M."/>
            <person name="White S."/>
            <person name="Whitehead S.L."/>
            <person name="Wilkinson J.E."/>
            <person name="Willey D.L."/>
            <person name="Williams H."/>
            <person name="Wilming L."/>
            <person name="Wray P.W."/>
            <person name="Wu Z."/>
            <person name="Coulson A."/>
            <person name="Vaudin M."/>
            <person name="Sulston J.E."/>
            <person name="Durbin R.M."/>
            <person name="Hubbard T."/>
            <person name="Wooster R."/>
            <person name="Dunham I."/>
            <person name="Carter N.P."/>
            <person name="McVean G."/>
            <person name="Ross M.T."/>
            <person name="Harrow J."/>
            <person name="Olson M.V."/>
            <person name="Beck S."/>
            <person name="Rogers J."/>
            <person name="Bentley D.R."/>
        </authorList>
    </citation>
    <scope>NUCLEOTIDE SEQUENCE [LARGE SCALE GENOMIC DNA]</scope>
</reference>
<reference key="4">
    <citation type="submission" date="2005-07" db="EMBL/GenBank/DDBJ databases">
        <authorList>
            <person name="Mural R.J."/>
            <person name="Istrail S."/>
            <person name="Sutton G.G."/>
            <person name="Florea L."/>
            <person name="Halpern A.L."/>
            <person name="Mobarry C.M."/>
            <person name="Lippert R."/>
            <person name="Walenz B."/>
            <person name="Shatkay H."/>
            <person name="Dew I."/>
            <person name="Miller J.R."/>
            <person name="Flanigan M.J."/>
            <person name="Edwards N.J."/>
            <person name="Bolanos R."/>
            <person name="Fasulo D."/>
            <person name="Halldorsson B.V."/>
            <person name="Hannenhalli S."/>
            <person name="Turner R."/>
            <person name="Yooseph S."/>
            <person name="Lu F."/>
            <person name="Nusskern D.R."/>
            <person name="Shue B.C."/>
            <person name="Zheng X.H."/>
            <person name="Zhong F."/>
            <person name="Delcher A.L."/>
            <person name="Huson D.H."/>
            <person name="Kravitz S.A."/>
            <person name="Mouchard L."/>
            <person name="Reinert K."/>
            <person name="Remington K.A."/>
            <person name="Clark A.G."/>
            <person name="Waterman M.S."/>
            <person name="Eichler E.E."/>
            <person name="Adams M.D."/>
            <person name="Hunkapiller M.W."/>
            <person name="Myers E.W."/>
            <person name="Venter J.C."/>
        </authorList>
    </citation>
    <scope>NUCLEOTIDE SEQUENCE [LARGE SCALE GENOMIC DNA]</scope>
</reference>
<reference key="5">
    <citation type="journal article" date="2004" name="Genome Res.">
        <title>The status, quality, and expansion of the NIH full-length cDNA project: the Mammalian Gene Collection (MGC).</title>
        <authorList>
            <consortium name="The MGC Project Team"/>
        </authorList>
    </citation>
    <scope>NUCLEOTIDE SEQUENCE [LARGE SCALE MRNA] (ISOFORMS 1 AND 2)</scope>
    <source>
        <tissue>Brain</tissue>
        <tissue>Testis</tissue>
    </source>
</reference>
<reference key="6">
    <citation type="journal article" date="2004" name="Mol. Cell">
        <title>Menin associates with a trithorax family histone methyltransferase complex and with the hoxc8 locus.</title>
        <authorList>
            <person name="Hughes C.M."/>
            <person name="Rozenblatt-Rosen O."/>
            <person name="Milne T.A."/>
            <person name="Copeland T.D."/>
            <person name="Levine S.S."/>
            <person name="Lee J.C."/>
            <person name="Hayes D.N."/>
            <person name="Shanmugam K.S."/>
            <person name="Bhattacharjee A."/>
            <person name="Biondi C.A."/>
            <person name="Kay G.F."/>
            <person name="Hayward N.K."/>
            <person name="Hess J.L."/>
            <person name="Meyerson M."/>
        </authorList>
    </citation>
    <scope>IDENTIFICATION IN THE MEN1-ASSOCIATED HISTONE METHYLTRANSFERASE COMPLEX</scope>
</reference>
<reference key="7">
    <citation type="journal article" date="2004" name="Mol. Cell. Biol.">
        <title>Leukemia proto-oncoprotein MLL forms a SET1-like histone methyltransferase complex with menin to regulate Hox gene expression.</title>
        <authorList>
            <person name="Yokoyama A."/>
            <person name="Wang Z."/>
            <person name="Wysocka J."/>
            <person name="Sanyal M."/>
            <person name="Aufiero D.J."/>
            <person name="Kitabayashi I."/>
            <person name="Herr W."/>
            <person name="Cleary M.L."/>
        </authorList>
    </citation>
    <scope>IDENTIFICATION IN THE MLL-LIKE COMPLEX</scope>
</reference>
<reference key="8">
    <citation type="journal article" date="2005" name="Cell">
        <title>Physical association and coordinate function of the H3 K4 methyltransferase MLL1 and the H4 K16 acetyltransferase MOF.</title>
        <authorList>
            <person name="Dou Y."/>
            <person name="Milne T.A."/>
            <person name="Tackett A.J."/>
            <person name="Smith E.R."/>
            <person name="Fukuda A."/>
            <person name="Wysocka J."/>
            <person name="Allis C.D."/>
            <person name="Chait B.T."/>
            <person name="Hess J.L."/>
            <person name="Roeder R.G."/>
        </authorList>
    </citation>
    <scope>IDENTIFICATION IN THE MLL1/MLL COMPLEX</scope>
</reference>
<reference key="9">
    <citation type="journal article" date="2005" name="J. Biol. Chem.">
        <title>CpG-binding protein (CXXC finger protein 1) is a component of the mammalian Set1 histone H3-Lys4 methyltransferase complex, the analogue of the yeast Set1/COMPASS complex.</title>
        <authorList>
            <person name="Lee J.-H."/>
            <person name="Skalnik D.G."/>
        </authorList>
    </citation>
    <scope>IDENTIFICATION IN THE SET1 COMPLEX</scope>
</reference>
<reference key="10">
    <citation type="journal article" date="2006" name="Cell">
        <title>Global, in vivo, and site-specific phosphorylation dynamics in signaling networks.</title>
        <authorList>
            <person name="Olsen J.V."/>
            <person name="Blagoev B."/>
            <person name="Gnad F."/>
            <person name="Macek B."/>
            <person name="Kumar C."/>
            <person name="Mortensen P."/>
            <person name="Mann M."/>
        </authorList>
    </citation>
    <scope>PHOSPHORYLATION [LARGE SCALE ANALYSIS] AT SER-350</scope>
    <scope>IDENTIFICATION BY MASS SPECTROMETRY [LARGE SCALE ANALYSIS]</scope>
    <source>
        <tissue>Cervix carcinoma</tissue>
    </source>
</reference>
<reference key="11">
    <citation type="journal article" date="2007" name="J. Biol. Chem.">
        <title>Identification and characterization of the human Set1B histone H3-Lys4 methyltransferase complex.</title>
        <authorList>
            <person name="Lee J.-H."/>
            <person name="Tate C.M."/>
            <person name="You J.-S."/>
            <person name="Skalnik D.G."/>
        </authorList>
    </citation>
    <scope>SUBCELLULAR LOCATION</scope>
    <scope>IDENTIFICATION IN THE SET1 COMPLEX</scope>
</reference>
<reference key="12">
    <citation type="journal article" date="2007" name="J. Biol. Chem.">
        <title>PTIP associates with MLL3- and MLL4-containing histone H3 lysine 4 methyltransferase complex.</title>
        <authorList>
            <person name="Cho Y.-W."/>
            <person name="Hong T."/>
            <person name="Hong S."/>
            <person name="Guo H."/>
            <person name="Yu H."/>
            <person name="Kim D."/>
            <person name="Guszczynski T."/>
            <person name="Dressler G.R."/>
            <person name="Copeland T.D."/>
            <person name="Kalkum M."/>
            <person name="Ge K."/>
        </authorList>
    </citation>
    <scope>IDENTIFICATION BY MASS SPECTROMETRY</scope>
    <scope>IDENTIFICATION IN THE MLL2/3 COMPLEX</scope>
</reference>
<reference key="13">
    <citation type="journal article" date="2008" name="Mol. Cell. Biol.">
        <title>Wdr82 is a C-terminal domain-binding protein that recruits the Setd1A Histone H3-Lys4 methyltransferase complex to transcription start sites of transcribed human genes.</title>
        <authorList>
            <person name="Lee J.H."/>
            <person name="Skalnik D.G."/>
        </authorList>
    </citation>
    <scope>IDENTIFICATION IN SET1 COMPLEX</scope>
    <scope>INTERACTION WITH SETD1A</scope>
</reference>
<reference key="14">
    <citation type="journal article" date="2008" name="Mol. Cell. Biol.">
        <title>Molecular regulation of H3K4 trimethylation by Wdr82, a component of human Set1/COMPASS.</title>
        <authorList>
            <person name="Wu M."/>
            <person name="Wang P.F."/>
            <person name="Lee J.S."/>
            <person name="Martin-Brown S."/>
            <person name="Florens L."/>
            <person name="Washburn M."/>
            <person name="Shilatifard A."/>
        </authorList>
    </citation>
    <scope>IDENTIFICATION IN SET1 COMPLEX</scope>
    <scope>INTERACTION WITH WDR82</scope>
</reference>
<reference key="15">
    <citation type="journal article" date="2009" name="J. Biol. Chem.">
        <title>Identification and characterization of a novel nuclear protein complex involved in nuclear hormone receptor-mediated gene regulation.</title>
        <authorList>
            <person name="Garapaty S."/>
            <person name="Xu C.F."/>
            <person name="Trojer P."/>
            <person name="Mahajan M.A."/>
            <person name="Neubert T.A."/>
            <person name="Samuels H.H."/>
        </authorList>
    </citation>
    <scope>FUNCTION</scope>
    <scope>IDENTIFICATION IN A HISTONE METHYLATION COMPLEX</scope>
    <scope>INTERACTION WITH ZNF335; ASH2L AND EMSY</scope>
</reference>
<reference key="16">
    <citation type="journal article" date="2009" name="J. Biol. Chem.">
        <title>On the mechanism of multiple lysine methylation by the human mixed lineage leukemia protein-1 (MLL1) core complex.</title>
        <authorList>
            <person name="Patel A."/>
            <person name="Dharmarajan V."/>
            <person name="Vought V.E."/>
            <person name="Cosgrove M.S."/>
        </authorList>
    </citation>
    <scope>FUNCTION</scope>
    <scope>CHARACTERIZATION OF THE MLL1/MLL COMPLEX</scope>
    <scope>INTERACTION WITH WDR5 AND ASH2L</scope>
</reference>
<reference key="17">
    <citation type="journal article" date="2010" name="Sci. Signal.">
        <title>Quantitative phosphoproteomics reveals widespread full phosphorylation site occupancy during mitosis.</title>
        <authorList>
            <person name="Olsen J.V."/>
            <person name="Vermeulen M."/>
            <person name="Santamaria A."/>
            <person name="Kumar C."/>
            <person name="Miller M.L."/>
            <person name="Jensen L.J."/>
            <person name="Gnad F."/>
            <person name="Cox J."/>
            <person name="Jensen T.S."/>
            <person name="Nigg E.A."/>
            <person name="Brunak S."/>
            <person name="Mann M."/>
        </authorList>
    </citation>
    <scope>PHOSPHORYLATION [LARGE SCALE ANALYSIS] AT SER-388 AND SER-389</scope>
    <scope>IDENTIFICATION BY MASS SPECTROMETRY [LARGE SCALE ANALYSIS]</scope>
    <source>
        <tissue>Cervix carcinoma</tissue>
    </source>
</reference>
<reference key="18">
    <citation type="journal article" date="2011" name="BMC Syst. Biol.">
        <title>Initial characterization of the human central proteome.</title>
        <authorList>
            <person name="Burkard T.R."/>
            <person name="Planyavsky M."/>
            <person name="Kaupe I."/>
            <person name="Breitwieser F.P."/>
            <person name="Buerckstuemmer T."/>
            <person name="Bennett K.L."/>
            <person name="Superti-Furga G."/>
            <person name="Colinge J."/>
        </authorList>
    </citation>
    <scope>IDENTIFICATION BY MASS SPECTROMETRY [LARGE SCALE ANALYSIS]</scope>
</reference>
<reference key="19">
    <citation type="journal article" date="2011" name="Sci. Signal.">
        <title>System-wide temporal characterization of the proteome and phosphoproteome of human embryonic stem cell differentiation.</title>
        <authorList>
            <person name="Rigbolt K.T."/>
            <person name="Prokhorova T.A."/>
            <person name="Akimov V."/>
            <person name="Henningsen J."/>
            <person name="Johansen P.T."/>
            <person name="Kratchmarova I."/>
            <person name="Kassem M."/>
            <person name="Mann M."/>
            <person name="Olsen J.V."/>
            <person name="Blagoev B."/>
        </authorList>
    </citation>
    <scope>PHOSPHORYLATION [LARGE SCALE ANALYSIS] AT SER-525</scope>
    <scope>IDENTIFICATION BY MASS SPECTROMETRY [LARGE SCALE ANALYSIS]</scope>
</reference>
<reference key="20">
    <citation type="journal article" date="2012" name="Cell">
        <title>Microcephaly gene links trithorax and REST/NRSF to control neural stem cell proliferation and differentiation.</title>
        <authorList>
            <person name="Yang Y.J."/>
            <person name="Baltus A.E."/>
            <person name="Mathew R.S."/>
            <person name="Murphy E.A."/>
            <person name="Evrony G.D."/>
            <person name="Gonzalez D.M."/>
            <person name="Wang E.P."/>
            <person name="Marshall-Walker C.A."/>
            <person name="Barry B.J."/>
            <person name="Murn J."/>
            <person name="Tatarakis A."/>
            <person name="Mahajan M.A."/>
            <person name="Samuels H.H."/>
            <person name="Shi Y."/>
            <person name="Golden J.A."/>
            <person name="Mahajnah M."/>
            <person name="Shenhav R."/>
            <person name="Walsh C.A."/>
        </authorList>
    </citation>
    <scope>INTERACTION WITH ZNF335</scope>
</reference>
<reference key="21">
    <citation type="journal article" date="2012" name="Nucleic Acids Res.">
        <title>The plasticity of WDR5 peptide-binding cleft enables the binding of the SET1 family of histone methyltransferases.</title>
        <authorList>
            <person name="Zhang P."/>
            <person name="Lee H."/>
            <person name="Brunzelle J.S."/>
            <person name="Couture J.F."/>
        </authorList>
    </citation>
    <scope>FUNCTION</scope>
</reference>
<reference key="22">
    <citation type="journal article" date="2017" name="Nat. Struct. Mol. Biol.">
        <title>Site-specific mapping of the human SUMO proteome reveals co-modification with phosphorylation.</title>
        <authorList>
            <person name="Hendriks I.A."/>
            <person name="Lyon D."/>
            <person name="Young C."/>
            <person name="Jensen L.J."/>
            <person name="Vertegaal A.C."/>
            <person name="Nielsen M.L."/>
        </authorList>
    </citation>
    <scope>SUMOYLATION [LARGE SCALE ANALYSIS] AT LYS-129</scope>
    <scope>IDENTIFICATION BY MASS SPECTROMETRY [LARGE SCALE ANALYSIS]</scope>
</reference>
<reference evidence="20" key="23">
    <citation type="journal article" date="2011" name="Structure">
        <title>Structural and biochemical insights into MLL1 core complex assembly.</title>
        <authorList>
            <person name="Avdic V."/>
            <person name="Zhang P."/>
            <person name="Lanouette S."/>
            <person name="Groulx A."/>
            <person name="Tremblay V."/>
            <person name="Brunzelle J."/>
            <person name="Couture J.F."/>
        </authorList>
    </citation>
    <scope>X-RAY CRYSTALLOGRAPHY (2.35 ANGSTROMS) OF 371-381 IN COMPLEX WITH KMT2A AND WDR5</scope>
    <scope>FUNCTION</scope>
    <scope>INTERACTION WITH ASH2L AND WDR5</scope>
    <scope>MUTAGENESIS OF GLU-374; VAL-375; ASP-376 AND VAL-377</scope>
</reference>
<dbReference type="EMBL" id="X85134">
    <property type="protein sequence ID" value="CAA59446.1"/>
    <property type="molecule type" value="mRNA"/>
</dbReference>
<dbReference type="EMBL" id="AK290137">
    <property type="protein sequence ID" value="BAF82826.1"/>
    <property type="molecule type" value="mRNA"/>
</dbReference>
<dbReference type="EMBL" id="AC093422">
    <property type="status" value="NOT_ANNOTATED_CDS"/>
    <property type="molecule type" value="Genomic_DNA"/>
</dbReference>
<dbReference type="EMBL" id="AL583832">
    <property type="status" value="NOT_ANNOTATED_CDS"/>
    <property type="molecule type" value="Genomic_DNA"/>
</dbReference>
<dbReference type="EMBL" id="CH471067">
    <property type="protein sequence ID" value="EAW91537.1"/>
    <property type="molecule type" value="Genomic_DNA"/>
</dbReference>
<dbReference type="EMBL" id="CH471067">
    <property type="protein sequence ID" value="EAW91538.1"/>
    <property type="molecule type" value="Genomic_DNA"/>
</dbReference>
<dbReference type="EMBL" id="BC037284">
    <property type="protein sequence ID" value="AAH37284.1"/>
    <property type="molecule type" value="mRNA"/>
</dbReference>
<dbReference type="EMBL" id="BC053856">
    <property type="protein sequence ID" value="AAH53856.1"/>
    <property type="molecule type" value="mRNA"/>
</dbReference>
<dbReference type="EMBL" id="BC075059">
    <property type="protein sequence ID" value="AAH75059.1"/>
    <property type="molecule type" value="mRNA"/>
</dbReference>
<dbReference type="EMBL" id="BC075060">
    <property type="protein sequence ID" value="AAH75060.1"/>
    <property type="molecule type" value="mRNA"/>
</dbReference>
<dbReference type="CCDS" id="CCDS30983.1">
    <molecule id="Q15291-1"/>
</dbReference>
<dbReference type="CCDS" id="CCDS53463.1">
    <molecule id="Q15291-2"/>
</dbReference>
<dbReference type="PIR" id="A57624">
    <property type="entry name" value="A57624"/>
</dbReference>
<dbReference type="RefSeq" id="NP_001180201.1">
    <molecule id="Q15291-2"/>
    <property type="nucleotide sequence ID" value="NM_001193272.2"/>
</dbReference>
<dbReference type="RefSeq" id="NP_001180202.1">
    <property type="nucleotide sequence ID" value="NM_001193273.1"/>
</dbReference>
<dbReference type="RefSeq" id="NP_005048.2">
    <molecule id="Q15291-1"/>
    <property type="nucleotide sequence ID" value="NM_005057.3"/>
</dbReference>
<dbReference type="PDB" id="3P4F">
    <property type="method" value="X-ray"/>
    <property type="resolution" value="2.35 A"/>
    <property type="chains" value="B=371-381"/>
</dbReference>
<dbReference type="PDB" id="4X8N">
    <property type="method" value="X-ray"/>
    <property type="resolution" value="2.10 A"/>
    <property type="chains" value="B=347-356"/>
</dbReference>
<dbReference type="PDB" id="4X8P">
    <property type="method" value="X-ray"/>
    <property type="resolution" value="2.20 A"/>
    <property type="chains" value="B=344-355"/>
</dbReference>
<dbReference type="PDB" id="5F6K">
    <property type="method" value="X-ray"/>
    <property type="resolution" value="2.41 A"/>
    <property type="chains" value="D/F=330-356"/>
</dbReference>
<dbReference type="PDB" id="5F6L">
    <property type="method" value="X-ray"/>
    <property type="resolution" value="1.90 A"/>
    <property type="chains" value="J=330-356"/>
</dbReference>
<dbReference type="PDB" id="6KIU">
    <property type="method" value="EM"/>
    <property type="resolution" value="3.20 A"/>
    <property type="chains" value="N=1-538"/>
</dbReference>
<dbReference type="PDB" id="6KIV">
    <property type="method" value="EM"/>
    <property type="resolution" value="4.00 A"/>
    <property type="chains" value="N=1-538"/>
</dbReference>
<dbReference type="PDB" id="6KIW">
    <property type="method" value="EM"/>
    <property type="resolution" value="4.00 A"/>
    <property type="chains" value="N=1-538"/>
</dbReference>
<dbReference type="PDB" id="6KIX">
    <property type="method" value="EM"/>
    <property type="resolution" value="4.10 A"/>
    <property type="chains" value="N=1-538"/>
</dbReference>
<dbReference type="PDB" id="6KIZ">
    <property type="method" value="EM"/>
    <property type="resolution" value="4.50 A"/>
    <property type="chains" value="N=1-538"/>
</dbReference>
<dbReference type="PDB" id="6KM7">
    <property type="method" value="X-ray"/>
    <property type="resolution" value="1.80 A"/>
    <property type="chains" value="A/B=10-325, C/D=390-480"/>
</dbReference>
<dbReference type="PDB" id="6PWV">
    <property type="method" value="EM"/>
    <property type="resolution" value="6.20 A"/>
    <property type="chains" value="A=2-538"/>
</dbReference>
<dbReference type="PDB" id="6PWW">
    <property type="method" value="EM"/>
    <property type="resolution" value="4.40 A"/>
    <property type="chains" value="A=2-538"/>
</dbReference>
<dbReference type="PDB" id="6PWX">
    <property type="method" value="EM"/>
    <property type="resolution" value="4.20 A"/>
    <property type="chains" value="A=2-538"/>
</dbReference>
<dbReference type="PDB" id="6W5I">
    <property type="method" value="EM"/>
    <property type="resolution" value="6.90 A"/>
    <property type="chains" value="A=2-538"/>
</dbReference>
<dbReference type="PDB" id="6W5M">
    <property type="method" value="EM"/>
    <property type="resolution" value="4.60 A"/>
    <property type="chains" value="A=2-538"/>
</dbReference>
<dbReference type="PDB" id="6W5N">
    <property type="method" value="EM"/>
    <property type="resolution" value="6.00 A"/>
    <property type="chains" value="A=2-538"/>
</dbReference>
<dbReference type="PDB" id="7BRE">
    <property type="method" value="X-ray"/>
    <property type="resolution" value="2.80 A"/>
    <property type="chains" value="C/F=330-356"/>
</dbReference>
<dbReference type="PDB" id="7MBM">
    <property type="method" value="EM"/>
    <property type="chains" value="A=2-538"/>
</dbReference>
<dbReference type="PDB" id="7MBN">
    <property type="method" value="EM"/>
    <property type="chains" value="A=2-538"/>
</dbReference>
<dbReference type="PDB" id="7UD5">
    <property type="method" value="EM"/>
    <property type="resolution" value="4.25 A"/>
    <property type="chains" value="N=1-538"/>
</dbReference>
<dbReference type="PDB" id="7W67">
    <property type="method" value="X-ray"/>
    <property type="resolution" value="2.19 A"/>
    <property type="chains" value="F=330-356"/>
</dbReference>
<dbReference type="PDB" id="7W6A">
    <property type="method" value="X-ray"/>
    <property type="resolution" value="2.21 A"/>
    <property type="chains" value="F=330-356"/>
</dbReference>
<dbReference type="PDB" id="7W6I">
    <property type="method" value="X-ray"/>
    <property type="resolution" value="2.56 A"/>
    <property type="chains" value="F=330-356"/>
</dbReference>
<dbReference type="PDB" id="7W6J">
    <property type="method" value="X-ray"/>
    <property type="resolution" value="2.68 A"/>
    <property type="chains" value="F=330-356"/>
</dbReference>
<dbReference type="PDB" id="7W6L">
    <property type="method" value="X-ray"/>
    <property type="resolution" value="2.26 A"/>
    <property type="chains" value="D/F=330-356"/>
</dbReference>
<dbReference type="PDB" id="8DU4">
    <property type="method" value="EM"/>
    <property type="resolution" value="3.55 A"/>
    <property type="chains" value="N=1-538"/>
</dbReference>
<dbReference type="PDBsum" id="3P4F"/>
<dbReference type="PDBsum" id="4X8N"/>
<dbReference type="PDBsum" id="4X8P"/>
<dbReference type="PDBsum" id="5F6K"/>
<dbReference type="PDBsum" id="5F6L"/>
<dbReference type="PDBsum" id="6KIU"/>
<dbReference type="PDBsum" id="6KIV"/>
<dbReference type="PDBsum" id="6KIW"/>
<dbReference type="PDBsum" id="6KIX"/>
<dbReference type="PDBsum" id="6KIZ"/>
<dbReference type="PDBsum" id="6KM7"/>
<dbReference type="PDBsum" id="6PWV"/>
<dbReference type="PDBsum" id="6PWW"/>
<dbReference type="PDBsum" id="6PWX"/>
<dbReference type="PDBsum" id="6W5I"/>
<dbReference type="PDBsum" id="6W5M"/>
<dbReference type="PDBsum" id="6W5N"/>
<dbReference type="PDBsum" id="7BRE"/>
<dbReference type="PDBsum" id="7MBM"/>
<dbReference type="PDBsum" id="7MBN"/>
<dbReference type="PDBsum" id="7UD5"/>
<dbReference type="PDBsum" id="7W67"/>
<dbReference type="PDBsum" id="7W6A"/>
<dbReference type="PDBsum" id="7W6I"/>
<dbReference type="PDBsum" id="7W6J"/>
<dbReference type="PDBsum" id="7W6L"/>
<dbReference type="PDBsum" id="8DU4"/>
<dbReference type="EMDB" id="EMD-0693"/>
<dbReference type="EMDB" id="EMD-0694"/>
<dbReference type="EMDB" id="EMD-0695"/>
<dbReference type="EMDB" id="EMD-20512"/>
<dbReference type="EMDB" id="EMD-20513"/>
<dbReference type="EMDB" id="EMD-20514"/>
<dbReference type="EMDB" id="EMD-21542"/>
<dbReference type="EMDB" id="EMD-21543"/>
<dbReference type="EMDB" id="EMD-21544"/>
<dbReference type="EMDB" id="EMD-23738"/>
<dbReference type="EMDB" id="EMD-23739"/>
<dbReference type="EMDB" id="EMD-26454"/>
<dbReference type="EMDB" id="EMD-27715"/>
<dbReference type="EMDB" id="EMD-9998"/>
<dbReference type="EMDB" id="EMD-9999"/>
<dbReference type="SASBDB" id="Q15291"/>
<dbReference type="SMR" id="Q15291"/>
<dbReference type="BioGRID" id="111864">
    <property type="interactions" value="299"/>
</dbReference>
<dbReference type="ComplexPortal" id="CPX-5850">
    <property type="entry name" value="Histone-lysine N-methyltransferase complex, KMT2A variant"/>
</dbReference>
<dbReference type="ComplexPortal" id="CPX-7062">
    <property type="entry name" value="Histone-lysine N-methyltransferase complex, KMT2B variant"/>
</dbReference>
<dbReference type="ComplexPortal" id="CPX-7091">
    <property type="entry name" value="Histone-lysine N-methyltransferase complex, KMT2C variant"/>
</dbReference>
<dbReference type="ComplexPortal" id="CPX-7104">
    <property type="entry name" value="Histone-lysine N-methyltransferase complex, KMT2D variant"/>
</dbReference>
<dbReference type="ComplexPortal" id="CPX-7110">
    <property type="entry name" value="Histone-lysine N-methyltransferase complex, SET1A variant"/>
</dbReference>
<dbReference type="ComplexPortal" id="CPX-7111">
    <property type="entry name" value="Histone-lysine N-methyltransferase complex, SET1B variant"/>
</dbReference>
<dbReference type="CORUM" id="Q15291"/>
<dbReference type="DIP" id="DIP-29224N"/>
<dbReference type="FunCoup" id="Q15291">
    <property type="interactions" value="4021"/>
</dbReference>
<dbReference type="IntAct" id="Q15291">
    <property type="interactions" value="115"/>
</dbReference>
<dbReference type="MINT" id="Q15291"/>
<dbReference type="STRING" id="9606.ENSP00000264515"/>
<dbReference type="BindingDB" id="Q15291"/>
<dbReference type="ChEMBL" id="CHEMBL3137282"/>
<dbReference type="GlyGen" id="Q15291">
    <property type="glycosylation" value="1 site, 1 O-linked glycan (1 site)"/>
</dbReference>
<dbReference type="iPTMnet" id="Q15291"/>
<dbReference type="PhosphoSitePlus" id="Q15291"/>
<dbReference type="SwissPalm" id="Q15291"/>
<dbReference type="BioMuta" id="RBBP5"/>
<dbReference type="DMDM" id="209572664"/>
<dbReference type="jPOST" id="Q15291"/>
<dbReference type="MassIVE" id="Q15291"/>
<dbReference type="PaxDb" id="9606-ENSP00000264515"/>
<dbReference type="PeptideAtlas" id="Q15291"/>
<dbReference type="ProteomicsDB" id="60517">
    <molecule id="Q15291-1"/>
</dbReference>
<dbReference type="ProteomicsDB" id="60518">
    <molecule id="Q15291-2"/>
</dbReference>
<dbReference type="Pumba" id="Q15291"/>
<dbReference type="ABCD" id="Q15291">
    <property type="antibodies" value="1 sequenced antibody"/>
</dbReference>
<dbReference type="Antibodypedia" id="34563">
    <property type="antibodies" value="297 antibodies from 38 providers"/>
</dbReference>
<dbReference type="DNASU" id="5929"/>
<dbReference type="Ensembl" id="ENST00000264515.11">
    <molecule id="Q15291-1"/>
    <property type="protein sequence ID" value="ENSP00000264515.6"/>
    <property type="gene ID" value="ENSG00000117222.14"/>
</dbReference>
<dbReference type="Ensembl" id="ENST00000367164.1">
    <molecule id="Q15291-2"/>
    <property type="protein sequence ID" value="ENSP00000356132.1"/>
    <property type="gene ID" value="ENSG00000117222.14"/>
</dbReference>
<dbReference type="GeneID" id="5929"/>
<dbReference type="KEGG" id="hsa:5929"/>
<dbReference type="MANE-Select" id="ENST00000264515.11">
    <property type="protein sequence ID" value="ENSP00000264515.6"/>
    <property type="RefSeq nucleotide sequence ID" value="NM_005057.4"/>
    <property type="RefSeq protein sequence ID" value="NP_005048.2"/>
</dbReference>
<dbReference type="UCSC" id="uc001hbu.3">
    <molecule id="Q15291-1"/>
    <property type="organism name" value="human"/>
</dbReference>
<dbReference type="AGR" id="HGNC:9888"/>
<dbReference type="CTD" id="5929"/>
<dbReference type="DisGeNET" id="5929"/>
<dbReference type="GeneCards" id="RBBP5"/>
<dbReference type="HGNC" id="HGNC:9888">
    <property type="gene designation" value="RBBP5"/>
</dbReference>
<dbReference type="HPA" id="ENSG00000117222">
    <property type="expression patterns" value="Low tissue specificity"/>
</dbReference>
<dbReference type="MIM" id="600697">
    <property type="type" value="gene"/>
</dbReference>
<dbReference type="neXtProt" id="NX_Q15291"/>
<dbReference type="OpenTargets" id="ENSG00000117222"/>
<dbReference type="PharmGKB" id="PA34252"/>
<dbReference type="VEuPathDB" id="HostDB:ENSG00000117222"/>
<dbReference type="eggNOG" id="KOG1273">
    <property type="taxonomic scope" value="Eukaryota"/>
</dbReference>
<dbReference type="GeneTree" id="ENSGT00530000064100"/>
<dbReference type="HOGENOM" id="CLU_032142_1_0_1"/>
<dbReference type="InParanoid" id="Q15291"/>
<dbReference type="OMA" id="DYEDDIM"/>
<dbReference type="OrthoDB" id="196858at2759"/>
<dbReference type="PAN-GO" id="Q15291">
    <property type="GO annotations" value="2 GO annotations based on evolutionary models"/>
</dbReference>
<dbReference type="PhylomeDB" id="Q15291"/>
<dbReference type="TreeFam" id="TF313289"/>
<dbReference type="PathwayCommons" id="Q15291"/>
<dbReference type="Reactome" id="R-HSA-201722">
    <property type="pathway name" value="Formation of the beta-catenin:TCF transactivating complex"/>
</dbReference>
<dbReference type="Reactome" id="R-HSA-3214841">
    <property type="pathway name" value="PKMTs methylate histone lysines"/>
</dbReference>
<dbReference type="Reactome" id="R-HSA-3769402">
    <property type="pathway name" value="Deactivation of the beta-catenin transactivating complex"/>
</dbReference>
<dbReference type="Reactome" id="R-HSA-5617472">
    <property type="pathway name" value="Activation of anterior HOX genes in hindbrain development during early embryogenesis"/>
</dbReference>
<dbReference type="Reactome" id="R-HSA-8936459">
    <property type="pathway name" value="RUNX1 regulates genes involved in megakaryocyte differentiation and platelet function"/>
</dbReference>
<dbReference type="Reactome" id="R-HSA-8951664">
    <property type="pathway name" value="Neddylation"/>
</dbReference>
<dbReference type="Reactome" id="R-HSA-9772755">
    <property type="pathway name" value="Formation of WDR5-containing histone-modifying complexes"/>
</dbReference>
<dbReference type="Reactome" id="R-HSA-9818564">
    <property type="pathway name" value="Epigenetic regulation of gene expression by MLL3 and MLL4 complexes"/>
</dbReference>
<dbReference type="Reactome" id="R-HSA-9841922">
    <property type="pathway name" value="MLL4 and MLL3 complexes regulate expression of PPARG target genes in adipogenesis and hepatic steatosis"/>
</dbReference>
<dbReference type="SignaLink" id="Q15291"/>
<dbReference type="SIGNOR" id="Q15291"/>
<dbReference type="BioGRID-ORCS" id="5929">
    <property type="hits" value="756 hits in 1184 CRISPR screens"/>
</dbReference>
<dbReference type="ChiTaRS" id="RBBP5">
    <property type="organism name" value="human"/>
</dbReference>
<dbReference type="EvolutionaryTrace" id="Q15291"/>
<dbReference type="GeneWiki" id="RBBP5"/>
<dbReference type="GenomeRNAi" id="5929"/>
<dbReference type="Pharos" id="Q15291">
    <property type="development level" value="Tbio"/>
</dbReference>
<dbReference type="PRO" id="PR:Q15291"/>
<dbReference type="Proteomes" id="UP000005640">
    <property type="component" value="Chromosome 1"/>
</dbReference>
<dbReference type="RNAct" id="Q15291">
    <property type="molecule type" value="protein"/>
</dbReference>
<dbReference type="Bgee" id="ENSG00000117222">
    <property type="expression patterns" value="Expressed in buccal mucosa cell and 143 other cell types or tissues"/>
</dbReference>
<dbReference type="ExpressionAtlas" id="Q15291">
    <property type="expression patterns" value="baseline and differential"/>
</dbReference>
<dbReference type="GO" id="GO:0035097">
    <property type="term" value="C:histone methyltransferase complex"/>
    <property type="evidence" value="ECO:0000314"/>
    <property type="project" value="UniProtKB"/>
</dbReference>
<dbReference type="GO" id="GO:0071339">
    <property type="term" value="C:MLL1 complex"/>
    <property type="evidence" value="ECO:0000314"/>
    <property type="project" value="UniProtKB"/>
</dbReference>
<dbReference type="GO" id="GO:0044665">
    <property type="term" value="C:MLL1/2 complex"/>
    <property type="evidence" value="ECO:0000353"/>
    <property type="project" value="ComplexPortal"/>
</dbReference>
<dbReference type="GO" id="GO:0044666">
    <property type="term" value="C:MLL3/4 complex"/>
    <property type="evidence" value="ECO:0000314"/>
    <property type="project" value="UniProtKB"/>
</dbReference>
<dbReference type="GO" id="GO:0005730">
    <property type="term" value="C:nucleolus"/>
    <property type="evidence" value="ECO:0000314"/>
    <property type="project" value="HPA"/>
</dbReference>
<dbReference type="GO" id="GO:0005654">
    <property type="term" value="C:nucleoplasm"/>
    <property type="evidence" value="ECO:0000314"/>
    <property type="project" value="HPA"/>
</dbReference>
<dbReference type="GO" id="GO:0005634">
    <property type="term" value="C:nucleus"/>
    <property type="evidence" value="ECO:0000314"/>
    <property type="project" value="UniProtKB"/>
</dbReference>
<dbReference type="GO" id="GO:0048188">
    <property type="term" value="C:Set1C/COMPASS complex"/>
    <property type="evidence" value="ECO:0000314"/>
    <property type="project" value="UniProtKB"/>
</dbReference>
<dbReference type="GO" id="GO:0042393">
    <property type="term" value="F:histone binding"/>
    <property type="evidence" value="ECO:0000314"/>
    <property type="project" value="UniProtKB"/>
</dbReference>
<dbReference type="GO" id="GO:0000976">
    <property type="term" value="F:transcription cis-regulatory region binding"/>
    <property type="evidence" value="ECO:0000314"/>
    <property type="project" value="UniProtKB"/>
</dbReference>
<dbReference type="GO" id="GO:0006974">
    <property type="term" value="P:DNA damage response"/>
    <property type="evidence" value="ECO:0000314"/>
    <property type="project" value="MGI"/>
</dbReference>
<dbReference type="GO" id="GO:0043627">
    <property type="term" value="P:response to estrogen"/>
    <property type="evidence" value="ECO:0000314"/>
    <property type="project" value="UniProtKB"/>
</dbReference>
<dbReference type="GO" id="GO:0045815">
    <property type="term" value="P:transcription initiation-coupled chromatin remodeling"/>
    <property type="evidence" value="ECO:0000314"/>
    <property type="project" value="UniProtKB"/>
</dbReference>
<dbReference type="FunFam" id="2.130.10.10:FF:000066">
    <property type="entry name" value="retinoblastoma-binding protein 5 isoform X2"/>
    <property type="match status" value="1"/>
</dbReference>
<dbReference type="Gene3D" id="2.130.10.10">
    <property type="entry name" value="YVTN repeat-like/Quinoprotein amine dehydrogenase"/>
    <property type="match status" value="1"/>
</dbReference>
<dbReference type="IDEAL" id="IID00387"/>
<dbReference type="InterPro" id="IPR037850">
    <property type="entry name" value="RBBP5/Swd1"/>
</dbReference>
<dbReference type="InterPro" id="IPR015943">
    <property type="entry name" value="WD40/YVTN_repeat-like_dom_sf"/>
</dbReference>
<dbReference type="InterPro" id="IPR001680">
    <property type="entry name" value="WD40_rpt"/>
</dbReference>
<dbReference type="PANTHER" id="PTHR44040">
    <property type="entry name" value="RETINOBLASTOMA-BINDING PROTEIN 5"/>
    <property type="match status" value="1"/>
</dbReference>
<dbReference type="PANTHER" id="PTHR44040:SF1">
    <property type="entry name" value="RETINOBLASTOMA-BINDING PROTEIN 5"/>
    <property type="match status" value="1"/>
</dbReference>
<dbReference type="Pfam" id="PF00400">
    <property type="entry name" value="WD40"/>
    <property type="match status" value="2"/>
</dbReference>
<dbReference type="SMART" id="SM00320">
    <property type="entry name" value="WD40"/>
    <property type="match status" value="5"/>
</dbReference>
<dbReference type="SUPFAM" id="SSF117289">
    <property type="entry name" value="Nucleoporin domain"/>
    <property type="match status" value="1"/>
</dbReference>
<dbReference type="PROSITE" id="PS50082">
    <property type="entry name" value="WD_REPEATS_2"/>
    <property type="match status" value="1"/>
</dbReference>
<dbReference type="PROSITE" id="PS50294">
    <property type="entry name" value="WD_REPEATS_REGION"/>
    <property type="match status" value="1"/>
</dbReference>
<accession>Q15291</accession>
<accession>A8K272</accession>
<accession>Q7Z6D8</accession>
<accession>Q8NDZ7</accession>
<name>RBBP5_HUMAN</name>
<proteinExistence type="evidence at protein level"/>
<sequence length="538" mass="59153">MNLELLESFGQNYPEEADGTLDCISMALTCTFNRWGTLLAVGCNDGRIVIWDFLTRGIAKIISAHIHPVCSLCWSRDGHKLVSASTDNIVSQWDVLSGDCDQRFRFPSPILKVQYHPRDQNKVLVCPMKSAPVMLTLSDSKHVVLPVDDDSDLNVVASFDRRGEYIYTGNAKGKILVLKTDSQDLVASFRVTTGTSNTTAIKSIEFARKGSCFLINTADRIIRVYDGREILTCGRDGEPEPMQKLQDLVNRTPWKKCCFSGDGEYIVAGSARQHALYIWEKSIGNLVKILHGTRGELLLDVAWHPVRPIIASISSGVVSIWAQNQVENWSAFAPDFKELDENVEYEERESEFDIEDEDKSEPEQTGADAAEDEEVDVTSVDPIAAFCSSDEELEDSKALLYLPIAPEVEDPEENPYGPPPDAVQTSLMDEGASSEKKRQSSADGSQPPKKKPKTTNIELQGVPNDEVHPLLGVKGDGKSKKKQAGRPKGSKGKEKDSPFKPKLYKGDRGLPLEGSAKGKVQAELSQPLTAGGAISELL</sequence>
<organism>
    <name type="scientific">Homo sapiens</name>
    <name type="common">Human</name>
    <dbReference type="NCBI Taxonomy" id="9606"/>
    <lineage>
        <taxon>Eukaryota</taxon>
        <taxon>Metazoa</taxon>
        <taxon>Chordata</taxon>
        <taxon>Craniata</taxon>
        <taxon>Vertebrata</taxon>
        <taxon>Euteleostomi</taxon>
        <taxon>Mammalia</taxon>
        <taxon>Eutheria</taxon>
        <taxon>Euarchontoglires</taxon>
        <taxon>Primates</taxon>
        <taxon>Haplorrhini</taxon>
        <taxon>Catarrhini</taxon>
        <taxon>Hominidae</taxon>
        <taxon>Homo</taxon>
    </lineage>
</organism>
<gene>
    <name type="primary">RBBP5</name>
    <name type="synonym">RBQ3</name>
</gene>